<keyword id="KW-0176">Collagen</keyword>
<keyword id="KW-0193">Cuticle</keyword>
<keyword id="KW-1015">Disulfide bond</keyword>
<keyword id="KW-1185">Reference proteome</keyword>
<keyword id="KW-0677">Repeat</keyword>
<reference key="1">
    <citation type="journal article" date="1998" name="Science">
        <title>Genome sequence of the nematode C. elegans: a platform for investigating biology.</title>
        <authorList>
            <consortium name="The C. elegans sequencing consortium"/>
        </authorList>
    </citation>
    <scope>NUCLEOTIDE SEQUENCE [LARGE SCALE GENOMIC DNA]</scope>
    <source>
        <strain>Bristol N2</strain>
    </source>
</reference>
<gene>
    <name type="primary">col-79</name>
    <name type="ORF">C09G5.3</name>
</gene>
<feature type="chain" id="PRO_0000127600" description="Putative cuticle collagen 79">
    <location>
        <begin position="1"/>
        <end position="283"/>
    </location>
</feature>
<feature type="region of interest" description="Disordered" evidence="2">
    <location>
        <begin position="59"/>
        <end position="283"/>
    </location>
</feature>
<feature type="region of interest" description="Triple-helical region">
    <location>
        <begin position="94"/>
        <end position="122"/>
    </location>
</feature>
<feature type="region of interest" description="Triple-helical region">
    <location>
        <begin position="139"/>
        <end position="201"/>
    </location>
</feature>
<feature type="region of interest" description="Triple-helical region">
    <location>
        <begin position="204"/>
        <end position="269"/>
    </location>
</feature>
<feature type="compositionally biased region" description="Pro residues" evidence="2">
    <location>
        <begin position="137"/>
        <end position="146"/>
    </location>
</feature>
<feature type="compositionally biased region" description="Acidic residues" evidence="2">
    <location>
        <begin position="226"/>
        <end position="240"/>
    </location>
</feature>
<feature type="compositionally biased region" description="Low complexity" evidence="2">
    <location>
        <begin position="253"/>
        <end position="265"/>
    </location>
</feature>
<dbReference type="EMBL" id="Z46791">
    <property type="protein sequence ID" value="CAA86756.1"/>
    <property type="molecule type" value="Genomic_DNA"/>
</dbReference>
<dbReference type="PIR" id="T19141">
    <property type="entry name" value="T19141"/>
</dbReference>
<dbReference type="RefSeq" id="NP_496308.1">
    <property type="nucleotide sequence ID" value="NM_063907.3"/>
</dbReference>
<dbReference type="SMR" id="Q09233"/>
<dbReference type="FunCoup" id="Q09233">
    <property type="interactions" value="324"/>
</dbReference>
<dbReference type="STRING" id="6239.C09G5.3.1"/>
<dbReference type="PaxDb" id="6239-C09G5.3"/>
<dbReference type="PeptideAtlas" id="Q09233"/>
<dbReference type="EnsemblMetazoa" id="C09G5.3.1">
    <property type="protein sequence ID" value="C09G5.3.1"/>
    <property type="gene ID" value="WBGene00000655"/>
</dbReference>
<dbReference type="GeneID" id="174650"/>
<dbReference type="KEGG" id="cel:CELE_C09G5.3"/>
<dbReference type="UCSC" id="C09G5.3">
    <property type="organism name" value="c. elegans"/>
</dbReference>
<dbReference type="AGR" id="WB:WBGene00000655"/>
<dbReference type="CTD" id="174650"/>
<dbReference type="WormBase" id="C09G5.3">
    <property type="protein sequence ID" value="CE01483"/>
    <property type="gene ID" value="WBGene00000655"/>
    <property type="gene designation" value="col-79"/>
</dbReference>
<dbReference type="eggNOG" id="KOG3544">
    <property type="taxonomic scope" value="Eukaryota"/>
</dbReference>
<dbReference type="GeneTree" id="ENSGT00970000196479"/>
<dbReference type="HOGENOM" id="CLU_001074_4_3_1"/>
<dbReference type="InParanoid" id="Q09233"/>
<dbReference type="OMA" id="QEPSNCP"/>
<dbReference type="OrthoDB" id="5866217at2759"/>
<dbReference type="PhylomeDB" id="Q09233"/>
<dbReference type="PRO" id="PR:Q09233"/>
<dbReference type="Proteomes" id="UP000001940">
    <property type="component" value="Chromosome II"/>
</dbReference>
<dbReference type="Bgee" id="WBGene00000655">
    <property type="expression patterns" value="Expressed in material anatomical entity and 4 other cell types or tissues"/>
</dbReference>
<dbReference type="GO" id="GO:0005581">
    <property type="term" value="C:collagen trimer"/>
    <property type="evidence" value="ECO:0007669"/>
    <property type="project" value="UniProtKB-KW"/>
</dbReference>
<dbReference type="GO" id="GO:0042302">
    <property type="term" value="F:structural constituent of cuticle"/>
    <property type="evidence" value="ECO:0007669"/>
    <property type="project" value="UniProtKB-KW"/>
</dbReference>
<dbReference type="InterPro" id="IPR002486">
    <property type="entry name" value="Col_cuticle_N"/>
</dbReference>
<dbReference type="PANTHER" id="PTHR24637">
    <property type="entry name" value="COLLAGEN"/>
    <property type="match status" value="1"/>
</dbReference>
<dbReference type="PANTHER" id="PTHR24637:SF375">
    <property type="entry name" value="CUTICLE COLLAGEN 79-RELATED"/>
    <property type="match status" value="1"/>
</dbReference>
<dbReference type="Pfam" id="PF01484">
    <property type="entry name" value="Col_cuticle_N"/>
    <property type="match status" value="1"/>
</dbReference>
<dbReference type="SMART" id="SM01088">
    <property type="entry name" value="Col_cuticle_N"/>
    <property type="match status" value="1"/>
</dbReference>
<protein>
    <recommendedName>
        <fullName>Putative cuticle collagen 79</fullName>
    </recommendedName>
</protein>
<accession>Q09233</accession>
<comment type="function">
    <text evidence="1">Nematode cuticles are composed largely of collagen-like proteins. The cuticle functions both as an exoskeleton and as a barrier to protect the worm from its environment (By similarity).</text>
</comment>
<comment type="subunit">
    <text evidence="1">Collagen polypeptide chains are complexed within the cuticle by disulfide bonds and other types of covalent cross-links.</text>
</comment>
<comment type="similarity">
    <text evidence="3">Belongs to the cuticular collagen family.</text>
</comment>
<organism>
    <name type="scientific">Caenorhabditis elegans</name>
    <dbReference type="NCBI Taxonomy" id="6239"/>
    <lineage>
        <taxon>Eukaryota</taxon>
        <taxon>Metazoa</taxon>
        <taxon>Ecdysozoa</taxon>
        <taxon>Nematoda</taxon>
        <taxon>Chromadorea</taxon>
        <taxon>Rhabditida</taxon>
        <taxon>Rhabditina</taxon>
        <taxon>Rhabditomorpha</taxon>
        <taxon>Rhabditoidea</taxon>
        <taxon>Rhabditidae</taxon>
        <taxon>Peloderinae</taxon>
        <taxon>Caenorhabditis</taxon>
    </lineage>
</organism>
<evidence type="ECO:0000250" key="1"/>
<evidence type="ECO:0000256" key="2">
    <source>
        <dbReference type="SAM" id="MobiDB-lite"/>
    </source>
</evidence>
<evidence type="ECO:0000305" key="3"/>
<sequence length="283" mass="28271">MDSRFVTYFASAISASVLVTTIFVCWNVTHDLNTLQAMSDRNMQDFKAISDRTWDKMMFKQQSSPPSPSLIFGRNKRSGDKCNCSEEPSNCPGGPPGPPGEKGNDGVDGVDGIPGFPGENGGAALDQPADGTCIKCPPGPRGPPGPQGEEGPSGDVGEDGEPGVPGNDGADGTPGKSGAPGGKGPQGPPGTPGRPGQPGRKAIGEAGPKGPPGAPGTDGRRGENGTDGDDGVDGQPGDEGDAGKDGTPGEPGPQGEQGTEGQPGTDGAYCPCPARSISKVAIQ</sequence>
<name>COL79_CAEEL</name>
<proteinExistence type="inferred from homology"/>